<dbReference type="EMBL" id="AAFI02000102">
    <property type="protein sequence ID" value="EAL63663.1"/>
    <property type="molecule type" value="Genomic_DNA"/>
</dbReference>
<dbReference type="RefSeq" id="XP_637168.1">
    <property type="nucleotide sequence ID" value="XM_632076.1"/>
</dbReference>
<dbReference type="PaxDb" id="44689-DDB0187509"/>
<dbReference type="EnsemblProtists" id="EAL63663">
    <property type="protein sequence ID" value="EAL63663"/>
    <property type="gene ID" value="DDB_G0287527"/>
</dbReference>
<dbReference type="GeneID" id="8626169"/>
<dbReference type="KEGG" id="ddi:DDB_G0287527"/>
<dbReference type="dictyBase" id="DDB_G0287527"/>
<dbReference type="VEuPathDB" id="AmoebaDB:DDB_G0287527"/>
<dbReference type="HOGENOM" id="CLU_2077491_0_0_1"/>
<dbReference type="InParanoid" id="Q54K87"/>
<dbReference type="PRO" id="PR:Q54K87"/>
<dbReference type="Proteomes" id="UP000002195">
    <property type="component" value="Chromosome 5"/>
</dbReference>
<dbReference type="GO" id="GO:0016020">
    <property type="term" value="C:membrane"/>
    <property type="evidence" value="ECO:0007669"/>
    <property type="project" value="UniProtKB-SubCell"/>
</dbReference>
<accession>Q54K87</accession>
<proteinExistence type="predicted"/>
<sequence>MYVQLKIINFYKTHQKPNLRIVYFFFFFGLETFFSIINPNDLTFFNYVIGVNNLDLTKKPNSSVDELIYFFDYLDSCWSSLMKSSNQNSKPIPWGLLLSNLIRWYDSNTIEALINNIL</sequence>
<evidence type="ECO:0000255" key="1"/>
<evidence type="ECO:0000305" key="2"/>
<reference key="1">
    <citation type="journal article" date="2005" name="Nature">
        <title>The genome of the social amoeba Dictyostelium discoideum.</title>
        <authorList>
            <person name="Eichinger L."/>
            <person name="Pachebat J.A."/>
            <person name="Gloeckner G."/>
            <person name="Rajandream M.A."/>
            <person name="Sucgang R."/>
            <person name="Berriman M."/>
            <person name="Song J."/>
            <person name="Olsen R."/>
            <person name="Szafranski K."/>
            <person name="Xu Q."/>
            <person name="Tunggal B."/>
            <person name="Kummerfeld S."/>
            <person name="Madera M."/>
            <person name="Konfortov B.A."/>
            <person name="Rivero F."/>
            <person name="Bankier A.T."/>
            <person name="Lehmann R."/>
            <person name="Hamlin N."/>
            <person name="Davies R."/>
            <person name="Gaudet P."/>
            <person name="Fey P."/>
            <person name="Pilcher K."/>
            <person name="Chen G."/>
            <person name="Saunders D."/>
            <person name="Sodergren E.J."/>
            <person name="Davis P."/>
            <person name="Kerhornou A."/>
            <person name="Nie X."/>
            <person name="Hall N."/>
            <person name="Anjard C."/>
            <person name="Hemphill L."/>
            <person name="Bason N."/>
            <person name="Farbrother P."/>
            <person name="Desany B."/>
            <person name="Just E."/>
            <person name="Morio T."/>
            <person name="Rost R."/>
            <person name="Churcher C.M."/>
            <person name="Cooper J."/>
            <person name="Haydock S."/>
            <person name="van Driessche N."/>
            <person name="Cronin A."/>
            <person name="Goodhead I."/>
            <person name="Muzny D.M."/>
            <person name="Mourier T."/>
            <person name="Pain A."/>
            <person name="Lu M."/>
            <person name="Harper D."/>
            <person name="Lindsay R."/>
            <person name="Hauser H."/>
            <person name="James K.D."/>
            <person name="Quiles M."/>
            <person name="Madan Babu M."/>
            <person name="Saito T."/>
            <person name="Buchrieser C."/>
            <person name="Wardroper A."/>
            <person name="Felder M."/>
            <person name="Thangavelu M."/>
            <person name="Johnson D."/>
            <person name="Knights A."/>
            <person name="Loulseged H."/>
            <person name="Mungall K.L."/>
            <person name="Oliver K."/>
            <person name="Price C."/>
            <person name="Quail M.A."/>
            <person name="Urushihara H."/>
            <person name="Hernandez J."/>
            <person name="Rabbinowitsch E."/>
            <person name="Steffen D."/>
            <person name="Sanders M."/>
            <person name="Ma J."/>
            <person name="Kohara Y."/>
            <person name="Sharp S."/>
            <person name="Simmonds M.N."/>
            <person name="Spiegler S."/>
            <person name="Tivey A."/>
            <person name="Sugano S."/>
            <person name="White B."/>
            <person name="Walker D."/>
            <person name="Woodward J.R."/>
            <person name="Winckler T."/>
            <person name="Tanaka Y."/>
            <person name="Shaulsky G."/>
            <person name="Schleicher M."/>
            <person name="Weinstock G.M."/>
            <person name="Rosenthal A."/>
            <person name="Cox E.C."/>
            <person name="Chisholm R.L."/>
            <person name="Gibbs R.A."/>
            <person name="Loomis W.F."/>
            <person name="Platzer M."/>
            <person name="Kay R.R."/>
            <person name="Williams J.G."/>
            <person name="Dear P.H."/>
            <person name="Noegel A.A."/>
            <person name="Barrell B.G."/>
            <person name="Kuspa A."/>
        </authorList>
    </citation>
    <scope>NUCLEOTIDE SEQUENCE [LARGE SCALE GENOMIC DNA]</scope>
    <source>
        <strain>AX4</strain>
    </source>
</reference>
<feature type="chain" id="PRO_0000347020" description="Putative uncharacterized protein DDB_G0287527">
    <location>
        <begin position="1"/>
        <end position="118"/>
    </location>
</feature>
<feature type="transmembrane region" description="Helical" evidence="1">
    <location>
        <begin position="21"/>
        <end position="38"/>
    </location>
</feature>
<organism>
    <name type="scientific">Dictyostelium discoideum</name>
    <name type="common">Social amoeba</name>
    <dbReference type="NCBI Taxonomy" id="44689"/>
    <lineage>
        <taxon>Eukaryota</taxon>
        <taxon>Amoebozoa</taxon>
        <taxon>Evosea</taxon>
        <taxon>Eumycetozoa</taxon>
        <taxon>Dictyostelia</taxon>
        <taxon>Dictyosteliales</taxon>
        <taxon>Dictyosteliaceae</taxon>
        <taxon>Dictyostelium</taxon>
    </lineage>
</organism>
<name>Y8750_DICDI</name>
<keyword id="KW-0472">Membrane</keyword>
<keyword id="KW-1185">Reference proteome</keyword>
<keyword id="KW-0812">Transmembrane</keyword>
<keyword id="KW-1133">Transmembrane helix</keyword>
<protein>
    <recommendedName>
        <fullName>Putative uncharacterized protein DDB_G0287527</fullName>
    </recommendedName>
</protein>
<comment type="subcellular location">
    <subcellularLocation>
        <location evidence="2">Membrane</location>
        <topology evidence="2">Single-pass membrane protein</topology>
    </subcellularLocation>
</comment>
<gene>
    <name type="ORF">DDB_G0287527</name>
</gene>